<organismHost>
    <name type="scientific">Bos taurus</name>
    <name type="common">Bovine</name>
    <dbReference type="NCBI Taxonomy" id="9913"/>
</organismHost>
<proteinExistence type="evidence at protein level"/>
<accession>Q01499</accession>
<organism>
    <name type="scientific">Bovine viral diarrhea virus (strain SD-1)</name>
    <name type="common">BVDV</name>
    <name type="synonym">Mucosal disease virus</name>
    <dbReference type="NCBI Taxonomy" id="31656"/>
    <lineage>
        <taxon>Viruses</taxon>
        <taxon>Riboviria</taxon>
        <taxon>Orthornavirae</taxon>
        <taxon>Kitrinoviricota</taxon>
        <taxon>Flasuviricetes</taxon>
        <taxon>Amarillovirales</taxon>
        <taxon>Flaviviridae</taxon>
        <taxon>Pestivirus</taxon>
        <taxon>Pestivirus bovis</taxon>
    </lineage>
</organism>
<reference key="1">
    <citation type="journal article" date="1992" name="Virology">
        <title>Molecular cloning and nucleotide sequence of a pestivirus genome, noncytopathic bovine viral diarrhea virus strain SD-1.</title>
        <authorList>
            <person name="Deng R."/>
            <person name="Brock K.V."/>
        </authorList>
    </citation>
    <scope>NUCLEOTIDE SEQUENCE [GENOMIC RNA]</scope>
</reference>
<reference evidence="15 16" key="2">
    <citation type="journal article" date="2013" name="Cell Rep.">
        <title>Structure of a pestivirus envelope glycoprotein E2 clarifies its role in cell entry.</title>
        <authorList>
            <person name="El Omari K."/>
            <person name="Iourin O."/>
            <person name="Harlos K."/>
            <person name="Grimes J.M."/>
            <person name="Stuart D.I."/>
        </authorList>
    </citation>
    <scope>X-RAY CRYSTALLOGRAPHY (2.58 ANGSTROMS) OF 696-1026</scope>
    <scope>GLYCOSYLATION AT ASN-809; ASN-878; ASN-922 AND ASN-990</scope>
    <scope>DISULFIDE BOND (ENVELOPE GLYCOPROTEIN E2)</scope>
</reference>
<name>POLG_BVDVS</name>
<feature type="chain" id="PRO_0000450892" description="Genome polyprotein">
    <location>
        <begin position="1"/>
        <end position="3898"/>
    </location>
</feature>
<feature type="chain" id="PRO_0000038037" description="N-terminal protease" evidence="1">
    <location>
        <begin position="1"/>
        <end position="168"/>
    </location>
</feature>
<feature type="chain" id="PRO_0000038038" description="Capsid protein C" evidence="1">
    <location>
        <begin position="169"/>
        <end position="270"/>
    </location>
</feature>
<feature type="chain" id="PRO_0000038039" description="E(rns) glycoprotein" evidence="1">
    <location>
        <begin position="271"/>
        <end position="497"/>
    </location>
</feature>
<feature type="chain" id="PRO_0000038040" description="Envelope glycoprotein E1" evidence="1">
    <location>
        <begin position="498"/>
        <end position="692"/>
    </location>
</feature>
<feature type="chain" id="PRO_0000038041" description="Envelope glycoprotein E2" evidence="1">
    <location>
        <begin position="693"/>
        <end position="1066"/>
    </location>
</feature>
<feature type="chain" id="PRO_0000038042" description="Viroporin p7" evidence="1">
    <location>
        <begin position="1067"/>
        <end position="1136"/>
    </location>
</feature>
<feature type="chain" id="PRO_0000038043" description="Non-structural protein 2-3" evidence="1">
    <location>
        <begin position="1137"/>
        <end position="2272"/>
    </location>
</feature>
<feature type="chain" id="PRO_0000038044" description="Cysteine protease NS2" evidence="10">
    <location>
        <begin position="1137"/>
        <end position="1589"/>
    </location>
</feature>
<feature type="chain" id="PRO_0000038045" description="Serine protease NS3" evidence="1">
    <location>
        <begin position="1590"/>
        <end position="2272"/>
    </location>
</feature>
<feature type="chain" id="PRO_0000038046" description="Non-structural protein 4A" evidence="1">
    <location>
        <begin position="2273"/>
        <end position="2336"/>
    </location>
</feature>
<feature type="chain" id="PRO_0000038047" description="Non-structural protein 4B" evidence="1">
    <location>
        <begin position="2337"/>
        <end position="2683"/>
    </location>
</feature>
<feature type="chain" id="PRO_0000038048" description="Non-structural protein 5A" evidence="1">
    <location>
        <begin position="2684"/>
        <end position="3179"/>
    </location>
</feature>
<feature type="chain" id="PRO_0000038049" description="RNA-directed RNA polymerase" evidence="1">
    <location>
        <begin position="3180"/>
        <end position="3898"/>
    </location>
</feature>
<feature type="topological domain" description="Lumenal" evidence="4">
    <location>
        <begin position="498"/>
        <end position="666"/>
    </location>
</feature>
<feature type="transmembrane region" description="Helical" evidence="5">
    <location>
        <begin position="667"/>
        <end position="687"/>
    </location>
</feature>
<feature type="topological domain" description="Lumenal" evidence="4">
    <location>
        <begin position="688"/>
        <end position="1035"/>
    </location>
</feature>
<feature type="transmembrane region" description="Helical" evidence="5">
    <location>
        <begin position="1036"/>
        <end position="1056"/>
    </location>
</feature>
<feature type="transmembrane region" description="Helical" evidence="5">
    <location>
        <begin position="1079"/>
        <end position="1099"/>
    </location>
</feature>
<feature type="transmembrane region" description="Helical" evidence="5">
    <location>
        <begin position="1108"/>
        <end position="1128"/>
    </location>
</feature>
<feature type="transmembrane region" description="Helical" evidence="10">
    <location>
        <begin position="1144"/>
        <end position="1164"/>
    </location>
</feature>
<feature type="transmembrane region" description="Helical" evidence="10">
    <location>
        <begin position="1189"/>
        <end position="1209"/>
    </location>
</feature>
<feature type="transmembrane region" description="Helical" evidence="10">
    <location>
        <begin position="1217"/>
        <end position="1237"/>
    </location>
</feature>
<feature type="transmembrane region" description="Helical" evidence="10">
    <location>
        <begin position="1247"/>
        <end position="1267"/>
    </location>
</feature>
<feature type="transmembrane region" description="Helical" evidence="10">
    <location>
        <begin position="1281"/>
        <end position="1301"/>
    </location>
</feature>
<feature type="transmembrane region" description="Helical" evidence="10">
    <location>
        <begin position="1360"/>
        <end position="1380"/>
    </location>
</feature>
<feature type="transmembrane region" description="Helical" evidence="10">
    <location>
        <begin position="1568"/>
        <end position="1588"/>
    </location>
</feature>
<feature type="domain" description="Peptidase C53" evidence="11">
    <location>
        <begin position="1"/>
        <end position="168"/>
    </location>
</feature>
<feature type="domain" description="Peptidase C74" evidence="10">
    <location>
        <begin position="1441"/>
        <end position="1589"/>
    </location>
</feature>
<feature type="domain" description="Peptidase S31" evidence="9">
    <location>
        <begin position="1590"/>
        <end position="1763"/>
    </location>
</feature>
<feature type="domain" description="Helicase ATP-binding" evidence="7">
    <location>
        <begin position="1802"/>
        <end position="1960"/>
    </location>
</feature>
<feature type="domain" description="Helicase C-terminal" evidence="8">
    <location>
        <begin position="1978"/>
        <end position="2143"/>
    </location>
</feature>
<feature type="domain" description="RdRp catalytic" evidence="6">
    <location>
        <begin position="3518"/>
        <end position="3641"/>
    </location>
</feature>
<feature type="region of interest" description="Disordered" evidence="12">
    <location>
        <begin position="47"/>
        <end position="72"/>
    </location>
</feature>
<feature type="region of interest" description="Disordered" evidence="12">
    <location>
        <begin position="172"/>
        <end position="209"/>
    </location>
</feature>
<feature type="region of interest" description="Disordered" evidence="12">
    <location>
        <begin position="223"/>
        <end position="245"/>
    </location>
</feature>
<feature type="short sequence motif" description="DEAH box" evidence="7">
    <location>
        <begin position="1910"/>
        <end position="1913"/>
    </location>
</feature>
<feature type="compositionally biased region" description="Basic and acidic residues" evidence="12">
    <location>
        <begin position="172"/>
        <end position="207"/>
    </location>
</feature>
<feature type="active site" description="For N-terminal protease activity" evidence="11">
    <location>
        <position position="49"/>
    </location>
</feature>
<feature type="active site" description="For N-terminal protease activity" evidence="11">
    <location>
        <position position="69"/>
    </location>
</feature>
<feature type="active site" description="For E(rns) glycoprotein RNase activity" evidence="4">
    <location>
        <position position="344"/>
    </location>
</feature>
<feature type="active site" description="For E(rns) glycoprotein RNase activity" evidence="4">
    <location>
        <position position="345"/>
    </location>
</feature>
<feature type="active site" description="For E(rns) glycoprotein RNase activity" evidence="4">
    <location>
        <position position="348"/>
    </location>
</feature>
<feature type="active site" description="For E(rns) glycoprotein RNase activity" evidence="4">
    <location>
        <position position="349"/>
    </location>
</feature>
<feature type="active site" description="For cysteine protease NS2 activity" evidence="10">
    <location>
        <position position="1447"/>
    </location>
</feature>
<feature type="active site" description="For cysteine protease NS2 activity" evidence="10">
    <location>
        <position position="1461"/>
    </location>
</feature>
<feature type="active site" description="For cysteine protease NS2 activity" evidence="10">
    <location>
        <position position="1512"/>
    </location>
</feature>
<feature type="active site" description="Charge relay system; for serine protease NS3 activity" evidence="9">
    <location>
        <position position="1658"/>
    </location>
</feature>
<feature type="active site" description="Charge relay system; for serine protease NS3 activity" evidence="9">
    <location>
        <position position="1695"/>
    </location>
</feature>
<feature type="active site" description="Charge relay system; for serine protease NS3 activity" evidence="9">
    <location>
        <position position="1752"/>
    </location>
</feature>
<feature type="binding site" evidence="7">
    <location>
        <begin position="1815"/>
        <end position="1822"/>
    </location>
    <ligand>
        <name>ATP</name>
        <dbReference type="ChEBI" id="CHEBI:30616"/>
    </ligand>
</feature>
<feature type="binding site" evidence="2">
    <location>
        <position position="3499"/>
    </location>
    <ligand>
        <name>GTP</name>
        <dbReference type="ChEBI" id="CHEBI:37565"/>
    </ligand>
</feature>
<feature type="binding site" evidence="2">
    <location>
        <position position="3501"/>
    </location>
    <ligand>
        <name>GTP</name>
        <dbReference type="ChEBI" id="CHEBI:37565"/>
    </ligand>
</feature>
<feature type="binding site" evidence="2">
    <location>
        <position position="3696"/>
    </location>
    <ligand>
        <name>GTP</name>
        <dbReference type="ChEBI" id="CHEBI:37565"/>
    </ligand>
</feature>
<feature type="binding site" evidence="2">
    <location>
        <position position="3704"/>
    </location>
    <ligand>
        <name>GTP</name>
        <dbReference type="ChEBI" id="CHEBI:37565"/>
    </ligand>
</feature>
<feature type="site" description="Cleavage; by autolysis" evidence="11">
    <location>
        <begin position="168"/>
        <end position="169"/>
    </location>
</feature>
<feature type="site" description="Cleavage; by host signal peptidase" evidence="3">
    <location>
        <begin position="270"/>
        <end position="271"/>
    </location>
</feature>
<feature type="site" description="Hydrogen donor to release the cleavage products of E(rns) glycoprotein RNase activity" evidence="4">
    <location>
        <position position="300"/>
    </location>
</feature>
<feature type="site" description="Cleavage" evidence="3">
    <location>
        <begin position="497"/>
        <end position="498"/>
    </location>
</feature>
<feature type="site" description="Cleavage; by host signal peptidase" evidence="3">
    <location>
        <begin position="692"/>
        <end position="693"/>
    </location>
</feature>
<feature type="site" description="Serves as pH sensor to control fusion" evidence="2">
    <location>
        <position position="762"/>
    </location>
</feature>
<feature type="site" description="Cleavage; by host signal peptidase; partial" evidence="1">
    <location>
        <begin position="1066"/>
        <end position="1067"/>
    </location>
</feature>
<feature type="site" description="Cleavage; by host signal peptidase" evidence="1">
    <location>
        <begin position="1136"/>
        <end position="1137"/>
    </location>
</feature>
<feature type="site" description="Cleavage; partial; cysteine protease NS2" evidence="10">
    <location>
        <begin position="1589"/>
        <end position="1590"/>
    </location>
</feature>
<feature type="site" description="Cleavage; by serine protease NS3" evidence="1">
    <location>
        <begin position="2272"/>
        <end position="2273"/>
    </location>
</feature>
<feature type="site" description="Cleavage; by serine protease NS3" evidence="1">
    <location>
        <begin position="2336"/>
        <end position="2337"/>
    </location>
</feature>
<feature type="site" description="Cleavage; by serine protease NS3" evidence="1">
    <location>
        <begin position="2683"/>
        <end position="2684"/>
    </location>
</feature>
<feature type="site" description="Cleavage; by serine protease NS3" evidence="1">
    <location>
        <begin position="3179"/>
        <end position="3180"/>
    </location>
</feature>
<feature type="glycosylation site" description="N-linked (GlcNAc...) asparagine; by host" evidence="5">
    <location>
        <position position="272"/>
    </location>
</feature>
<feature type="glycosylation site" description="N-linked (GlcNAc...) asparagine; by host" evidence="5">
    <location>
        <position position="281"/>
    </location>
</feature>
<feature type="glycosylation site" description="N-linked (GlcNAc...) asparagine; by host" evidence="5">
    <location>
        <position position="296"/>
    </location>
</feature>
<feature type="glycosylation site" description="N-linked (GlcNAc...) asparagine; by host" evidence="5">
    <location>
        <position position="335"/>
    </location>
</feature>
<feature type="glycosylation site" description="N-linked (GlcNAc...) asparagine; by host" evidence="5">
    <location>
        <position position="365"/>
    </location>
</feature>
<feature type="glycosylation site" description="N-linked (GlcNAc...) asparagine; by host" evidence="5">
    <location>
        <position position="370"/>
    </location>
</feature>
<feature type="glycosylation site" description="N-linked (GlcNAc...) asparagine; by host" evidence="5">
    <location>
        <position position="413"/>
    </location>
</feature>
<feature type="glycosylation site" description="N-linked (GlcNAc...) asparagine; by host" evidence="5">
    <location>
        <position position="487"/>
    </location>
</feature>
<feature type="glycosylation site" description="N-linked (GlcNAc...) asparagine; by host" evidence="5">
    <location>
        <position position="597"/>
    </location>
</feature>
<feature type="glycosylation site" description="N-linked (GlcNAc...) asparagine; by host" evidence="13">
    <location>
        <position position="809"/>
    </location>
</feature>
<feature type="glycosylation site" description="N-linked (GlcNAc...) asparagine; by host" evidence="13">
    <location>
        <position position="878"/>
    </location>
</feature>
<feature type="glycosylation site" description="N-linked (GlcNAc...) asparagine; by host" evidence="13">
    <location>
        <position position="922"/>
    </location>
</feature>
<feature type="glycosylation site" description="N-linked (GlcNAc...) asparagine; by host" evidence="13">
    <location>
        <position position="990"/>
    </location>
</feature>
<feature type="glycosylation site" description="N-linked (GlcNAc...) asparagine; by host" evidence="5">
    <location>
        <position position="1357"/>
    </location>
</feature>
<feature type="glycosylation site" description="N-linked (GlcNAc...) asparagine; by host" evidence="5">
    <location>
        <position position="1419"/>
    </location>
</feature>
<feature type="glycosylation site" description="N-linked (GlcNAc...) asparagine; by host" evidence="5">
    <location>
        <position position="1451"/>
    </location>
</feature>
<feature type="glycosylation site" description="N-linked (GlcNAc...) asparagine; by host" evidence="5">
    <location>
        <position position="1713"/>
    </location>
</feature>
<feature type="glycosylation site" description="N-linked (GlcNAc...) asparagine; by host" evidence="5">
    <location>
        <position position="2134"/>
    </location>
</feature>
<feature type="glycosylation site" description="N-linked (GlcNAc...) asparagine; by host" evidence="5">
    <location>
        <position position="2217"/>
    </location>
</feature>
<feature type="glycosylation site" description="N-linked (GlcNAc...) asparagine; by host" evidence="5">
    <location>
        <position position="2494"/>
    </location>
</feature>
<feature type="glycosylation site" description="N-linked (GlcNAc...) asparagine; by host" evidence="5">
    <location>
        <position position="2682"/>
    </location>
</feature>
<feature type="glycosylation site" description="N-linked (GlcNAc...) asparagine; by host" evidence="5">
    <location>
        <position position="2751"/>
    </location>
</feature>
<feature type="glycosylation site" description="N-linked (GlcNAc...) asparagine; by host" evidence="5">
    <location>
        <position position="2891"/>
    </location>
</feature>
<feature type="glycosylation site" description="N-linked (GlcNAc...) asparagine; by host" evidence="5">
    <location>
        <position position="2988"/>
    </location>
</feature>
<feature type="glycosylation site" description="N-linked (GlcNAc...) asparagine; by host" evidence="5">
    <location>
        <position position="3688"/>
    </location>
</feature>
<feature type="glycosylation site" description="N-linked (GlcNAc...) asparagine; by host" evidence="5">
    <location>
        <position position="3777"/>
    </location>
</feature>
<feature type="glycosylation site" description="N-linked (GlcNAc...) asparagine; by host" evidence="5">
    <location>
        <position position="3793"/>
    </location>
</feature>
<feature type="disulfide bond" evidence="4">
    <location>
        <begin position="308"/>
        <end position="352"/>
    </location>
</feature>
<feature type="disulfide bond" evidence="4">
    <location>
        <begin position="338"/>
        <end position="339"/>
    </location>
</feature>
<feature type="disulfide bond" evidence="4">
    <location>
        <begin position="380"/>
        <end position="425"/>
    </location>
</feature>
<feature type="disulfide bond" evidence="4">
    <location>
        <begin position="384"/>
        <end position="408"/>
    </location>
</feature>
<feature type="disulfide bond" description="Interchain" evidence="4">
    <location>
        <position position="441"/>
    </location>
</feature>
<feature type="disulfide bond" evidence="2">
    <location>
        <begin position="696"/>
        <end position="740"/>
    </location>
</feature>
<feature type="disulfide bond" evidence="2">
    <location>
        <begin position="751"/>
        <end position="798"/>
    </location>
</feature>
<feature type="disulfide bond" description="Interchain" evidence="13">
    <location>
        <position position="987"/>
    </location>
</feature>
<feature type="strand" evidence="17">
    <location>
        <begin position="700"/>
        <end position="706"/>
    </location>
</feature>
<feature type="strand" evidence="17">
    <location>
        <begin position="714"/>
        <end position="716"/>
    </location>
</feature>
<feature type="strand" evidence="17">
    <location>
        <begin position="718"/>
        <end position="720"/>
    </location>
</feature>
<feature type="strand" evidence="17">
    <location>
        <begin position="730"/>
        <end position="732"/>
    </location>
</feature>
<feature type="strand" evidence="17">
    <location>
        <begin position="734"/>
        <end position="750"/>
    </location>
</feature>
<feature type="strand" evidence="17">
    <location>
        <begin position="756"/>
        <end position="765"/>
    </location>
</feature>
<feature type="helix" evidence="17">
    <location>
        <begin position="767"/>
        <end position="769"/>
    </location>
</feature>
<feature type="strand" evidence="17">
    <location>
        <begin position="771"/>
        <end position="776"/>
    </location>
</feature>
<feature type="strand" evidence="17">
    <location>
        <begin position="783"/>
        <end position="786"/>
    </location>
</feature>
<feature type="strand" evidence="17">
    <location>
        <begin position="793"/>
        <end position="795"/>
    </location>
</feature>
<feature type="helix" evidence="17">
    <location>
        <begin position="797"/>
        <end position="799"/>
    </location>
</feature>
<feature type="strand" evidence="17">
    <location>
        <begin position="801"/>
        <end position="808"/>
    </location>
</feature>
<feature type="strand" evidence="17">
    <location>
        <begin position="811"/>
        <end position="814"/>
    </location>
</feature>
<feature type="strand" evidence="17">
    <location>
        <begin position="817"/>
        <end position="820"/>
    </location>
</feature>
<feature type="strand" evidence="17">
    <location>
        <begin position="828"/>
        <end position="835"/>
    </location>
</feature>
<feature type="turn" evidence="17">
    <location>
        <begin position="837"/>
        <end position="839"/>
    </location>
</feature>
<feature type="strand" evidence="17">
    <location>
        <begin position="842"/>
        <end position="852"/>
    </location>
</feature>
<feature type="strand" evidence="17">
    <location>
        <begin position="863"/>
        <end position="866"/>
    </location>
</feature>
<feature type="strand" evidence="17">
    <location>
        <begin position="869"/>
        <end position="875"/>
    </location>
</feature>
<feature type="helix" evidence="17">
    <location>
        <begin position="878"/>
        <end position="880"/>
    </location>
</feature>
<feature type="strand" evidence="17">
    <location>
        <begin position="882"/>
        <end position="886"/>
    </location>
</feature>
<feature type="strand" evidence="17">
    <location>
        <begin position="894"/>
        <end position="899"/>
    </location>
</feature>
<feature type="strand" evidence="17">
    <location>
        <begin position="902"/>
        <end position="906"/>
    </location>
</feature>
<feature type="strand" evidence="17">
    <location>
        <begin position="910"/>
        <end position="914"/>
    </location>
</feature>
<feature type="strand" evidence="17">
    <location>
        <begin position="916"/>
        <end position="920"/>
    </location>
</feature>
<feature type="strand" evidence="17">
    <location>
        <begin position="924"/>
        <end position="928"/>
    </location>
</feature>
<feature type="strand" evidence="17">
    <location>
        <begin position="934"/>
        <end position="936"/>
    </location>
</feature>
<feature type="strand" evidence="17">
    <location>
        <begin position="939"/>
        <end position="941"/>
    </location>
</feature>
<feature type="strand" evidence="17">
    <location>
        <begin position="946"/>
        <end position="951"/>
    </location>
</feature>
<feature type="strand" evidence="17">
    <location>
        <begin position="954"/>
        <end position="961"/>
    </location>
</feature>
<feature type="strand" evidence="17">
    <location>
        <begin position="964"/>
        <end position="967"/>
    </location>
</feature>
<feature type="strand" evidence="17">
    <location>
        <begin position="969"/>
        <end position="973"/>
    </location>
</feature>
<feature type="strand" evidence="17">
    <location>
        <begin position="976"/>
        <end position="982"/>
    </location>
</feature>
<feature type="strand" evidence="17">
    <location>
        <begin position="985"/>
        <end position="993"/>
    </location>
</feature>
<feature type="turn" evidence="17">
    <location>
        <begin position="1005"/>
        <end position="1007"/>
    </location>
</feature>
<feature type="strand" evidence="17">
    <location>
        <begin position="1011"/>
        <end position="1013"/>
    </location>
</feature>
<feature type="strand" evidence="17">
    <location>
        <begin position="1016"/>
        <end position="1024"/>
    </location>
</feature>
<keyword id="KW-0002">3D-structure</keyword>
<keyword id="KW-1072">Activation of host autophagy by virus</keyword>
<keyword id="KW-0067">ATP-binding</keyword>
<keyword id="KW-1165">Clathrin-mediated endocytosis of virus by host</keyword>
<keyword id="KW-1015">Disulfide bond</keyword>
<keyword id="KW-1170">Fusion of virus membrane with host endosomal membrane</keyword>
<keyword id="KW-1168">Fusion of virus membrane with host membrane</keyword>
<keyword id="KW-0325">Glycoprotein</keyword>
<keyword id="KW-0342">GTP-binding</keyword>
<keyword id="KW-0347">Helicase</keyword>
<keyword id="KW-1035">Host cytoplasm</keyword>
<keyword id="KW-1038">Host endoplasmic reticulum</keyword>
<keyword id="KW-1043">Host membrane</keyword>
<keyword id="KW-0945">Host-virus interaction</keyword>
<keyword id="KW-0378">Hydrolase</keyword>
<keyword id="KW-1090">Inhibition of host innate immune response by virus</keyword>
<keyword id="KW-1092">Inhibition of host IRF3 by virus</keyword>
<keyword id="KW-1113">Inhibition of host RLR pathway by virus</keyword>
<keyword id="KW-0407">Ion channel</keyword>
<keyword id="KW-0406">Ion transport</keyword>
<keyword id="KW-0456">Lyase</keyword>
<keyword id="KW-0472">Membrane</keyword>
<keyword id="KW-0540">Nuclease</keyword>
<keyword id="KW-0547">Nucleotide-binding</keyword>
<keyword id="KW-0548">Nucleotidyltransferase</keyword>
<keyword id="KW-0645">Protease</keyword>
<keyword id="KW-0696">RNA-directed RNA polymerase</keyword>
<keyword id="KW-0720">Serine protease</keyword>
<keyword id="KW-0788">Thiol protease</keyword>
<keyword id="KW-0808">Transferase</keyword>
<keyword id="KW-0812">Transmembrane</keyword>
<keyword id="KW-1133">Transmembrane helix</keyword>
<keyword id="KW-0813">Transport</keyword>
<keyword id="KW-1161">Viral attachment to host cell</keyword>
<keyword id="KW-0899">Viral immunoevasion</keyword>
<keyword id="KW-1182">Viral ion channel</keyword>
<keyword id="KW-1162">Viral penetration into host cytoplasm</keyword>
<keyword id="KW-0693">Viral RNA replication</keyword>
<keyword id="KW-0946">Virion</keyword>
<keyword id="KW-1164">Virus endocytosis by host</keyword>
<keyword id="KW-1160">Virus entry into host cell</keyword>
<dbReference type="EC" id="3.4.22.-"/>
<dbReference type="EC" id="4.6.1.19" evidence="4"/>
<dbReference type="EC" id="3.4.21.113"/>
<dbReference type="EC" id="3.6.1.15"/>
<dbReference type="EC" id="3.6.4.13"/>
<dbReference type="EC" id="2.7.7.48"/>
<dbReference type="EMBL" id="M96751">
    <property type="protein sequence ID" value="AAA42860.1"/>
    <property type="molecule type" value="Genomic_RNA"/>
</dbReference>
<dbReference type="PIR" id="A44217">
    <property type="entry name" value="A44217"/>
</dbReference>
<dbReference type="RefSeq" id="YP_010796452.1">
    <property type="nucleotide sequence ID" value="NC_076029.1"/>
</dbReference>
<dbReference type="PDB" id="2YQ2">
    <property type="method" value="X-ray"/>
    <property type="resolution" value="2.58 A"/>
    <property type="chains" value="A/B=696-1026"/>
</dbReference>
<dbReference type="PDB" id="2YQ3">
    <property type="method" value="X-ray"/>
    <property type="resolution" value="3.29 A"/>
    <property type="chains" value="A/B=696-1026"/>
</dbReference>
<dbReference type="PDBsum" id="2YQ2"/>
<dbReference type="PDBsum" id="2YQ3"/>
<dbReference type="SMR" id="Q01499"/>
<dbReference type="MEROPS" id="S31.001"/>
<dbReference type="iPTMnet" id="Q01499"/>
<dbReference type="GeneID" id="80533946"/>
<dbReference type="BRENDA" id="3.4.21.113">
    <property type="organism ID" value="925"/>
</dbReference>
<dbReference type="Proteomes" id="UP000007619">
    <property type="component" value="Genome"/>
</dbReference>
<dbReference type="GO" id="GO:0044167">
    <property type="term" value="C:host cell endoplasmic reticulum membrane"/>
    <property type="evidence" value="ECO:0007669"/>
    <property type="project" value="UniProtKB-SubCell"/>
</dbReference>
<dbReference type="GO" id="GO:0016020">
    <property type="term" value="C:membrane"/>
    <property type="evidence" value="ECO:0007669"/>
    <property type="project" value="UniProtKB-KW"/>
</dbReference>
<dbReference type="GO" id="GO:0055036">
    <property type="term" value="C:virion membrane"/>
    <property type="evidence" value="ECO:0007669"/>
    <property type="project" value="UniProtKB-SubCell"/>
</dbReference>
<dbReference type="GO" id="GO:0005524">
    <property type="term" value="F:ATP binding"/>
    <property type="evidence" value="ECO:0007669"/>
    <property type="project" value="UniProtKB-KW"/>
</dbReference>
<dbReference type="GO" id="GO:0016887">
    <property type="term" value="F:ATP hydrolysis activity"/>
    <property type="evidence" value="ECO:0007669"/>
    <property type="project" value="RHEA"/>
</dbReference>
<dbReference type="GO" id="GO:0015267">
    <property type="term" value="F:channel activity"/>
    <property type="evidence" value="ECO:0007669"/>
    <property type="project" value="UniProtKB-KW"/>
</dbReference>
<dbReference type="GO" id="GO:0004197">
    <property type="term" value="F:cysteine-type endopeptidase activity"/>
    <property type="evidence" value="ECO:0007669"/>
    <property type="project" value="InterPro"/>
</dbReference>
<dbReference type="GO" id="GO:0005525">
    <property type="term" value="F:GTP binding"/>
    <property type="evidence" value="ECO:0007669"/>
    <property type="project" value="UniProtKB-KW"/>
</dbReference>
<dbReference type="GO" id="GO:0033897">
    <property type="term" value="F:ribonuclease T2 activity"/>
    <property type="evidence" value="ECO:0007669"/>
    <property type="project" value="InterPro"/>
</dbReference>
<dbReference type="GO" id="GO:0003723">
    <property type="term" value="F:RNA binding"/>
    <property type="evidence" value="ECO:0007669"/>
    <property type="project" value="InterPro"/>
</dbReference>
<dbReference type="GO" id="GO:0003724">
    <property type="term" value="F:RNA helicase activity"/>
    <property type="evidence" value="ECO:0007669"/>
    <property type="project" value="UniProtKB-EC"/>
</dbReference>
<dbReference type="GO" id="GO:0003968">
    <property type="term" value="F:RNA-directed RNA polymerase activity"/>
    <property type="evidence" value="ECO:0007669"/>
    <property type="project" value="UniProtKB-KW"/>
</dbReference>
<dbReference type="GO" id="GO:0004252">
    <property type="term" value="F:serine-type endopeptidase activity"/>
    <property type="evidence" value="ECO:0007669"/>
    <property type="project" value="InterPro"/>
</dbReference>
<dbReference type="GO" id="GO:0070008">
    <property type="term" value="F:serine-type exopeptidase activity"/>
    <property type="evidence" value="ECO:0007669"/>
    <property type="project" value="InterPro"/>
</dbReference>
<dbReference type="GO" id="GO:0075512">
    <property type="term" value="P:clathrin-dependent endocytosis of virus by host cell"/>
    <property type="evidence" value="ECO:0007669"/>
    <property type="project" value="UniProtKB-KW"/>
</dbReference>
<dbReference type="GO" id="GO:0039654">
    <property type="term" value="P:fusion of virus membrane with host endosome membrane"/>
    <property type="evidence" value="ECO:0007669"/>
    <property type="project" value="UniProtKB-KW"/>
</dbReference>
<dbReference type="GO" id="GO:0034220">
    <property type="term" value="P:monoatomic ion transmembrane transport"/>
    <property type="evidence" value="ECO:0007669"/>
    <property type="project" value="UniProtKB-KW"/>
</dbReference>
<dbReference type="GO" id="GO:0006508">
    <property type="term" value="P:proteolysis"/>
    <property type="evidence" value="ECO:0007669"/>
    <property type="project" value="UniProtKB-KW"/>
</dbReference>
<dbReference type="GO" id="GO:0039520">
    <property type="term" value="P:symbiont-mediated activation of host autophagy"/>
    <property type="evidence" value="ECO:0007669"/>
    <property type="project" value="UniProtKB-KW"/>
</dbReference>
<dbReference type="GO" id="GO:0039548">
    <property type="term" value="P:symbiont-mediated suppression of host cytoplasmic pattern recognition receptor signaling pathway via inhibition of IRF3 activity"/>
    <property type="evidence" value="ECO:0007669"/>
    <property type="project" value="UniProtKB-KW"/>
</dbReference>
<dbReference type="GO" id="GO:0019082">
    <property type="term" value="P:viral protein processing"/>
    <property type="evidence" value="ECO:0007669"/>
    <property type="project" value="InterPro"/>
</dbReference>
<dbReference type="GO" id="GO:0039694">
    <property type="term" value="P:viral RNA genome replication"/>
    <property type="evidence" value="ECO:0007669"/>
    <property type="project" value="InterPro"/>
</dbReference>
<dbReference type="GO" id="GO:0019062">
    <property type="term" value="P:virion attachment to host cell"/>
    <property type="evidence" value="ECO:0007669"/>
    <property type="project" value="UniProtKB-KW"/>
</dbReference>
<dbReference type="CDD" id="cd17931">
    <property type="entry name" value="DEXHc_viral_Ns3"/>
    <property type="match status" value="1"/>
</dbReference>
<dbReference type="CDD" id="cd23201">
    <property type="entry name" value="Pestivirus_RdRp"/>
    <property type="match status" value="1"/>
</dbReference>
<dbReference type="FunFam" id="3.30.70.270:FF:000051">
    <property type="entry name" value="Genome polyprotein"/>
    <property type="match status" value="1"/>
</dbReference>
<dbReference type="FunFam" id="3.30.70.270:FF:000083">
    <property type="entry name" value="Genome polyprotein"/>
    <property type="match status" value="1"/>
</dbReference>
<dbReference type="FunFam" id="3.40.50.300:FF:001125">
    <property type="entry name" value="Genome polyprotein"/>
    <property type="match status" value="1"/>
</dbReference>
<dbReference type="FunFam" id="3.40.50.300:FF:001127">
    <property type="entry name" value="Genome polyprotein"/>
    <property type="match status" value="1"/>
</dbReference>
<dbReference type="FunFam" id="3.90.730.10:FF:000005">
    <property type="entry name" value="Genome polyprotein"/>
    <property type="match status" value="1"/>
</dbReference>
<dbReference type="Gene3D" id="3.30.70.270">
    <property type="match status" value="2"/>
</dbReference>
<dbReference type="Gene3D" id="3.40.50.300">
    <property type="entry name" value="P-loop containing nucleotide triphosphate hydrolases"/>
    <property type="match status" value="2"/>
</dbReference>
<dbReference type="Gene3D" id="2.60.40.4200">
    <property type="entry name" value="Pestivirus envelope glycoprotein E2, C-terminal domain"/>
    <property type="match status" value="1"/>
</dbReference>
<dbReference type="Gene3D" id="2.60.320.20">
    <property type="entry name" value="Pestivirus envelope glycoprotein E2, domain A"/>
    <property type="match status" value="1"/>
</dbReference>
<dbReference type="Gene3D" id="2.60.40.3000">
    <property type="entry name" value="Pestivirus envelope glycoprotein E2, domain B"/>
    <property type="match status" value="1"/>
</dbReference>
<dbReference type="Gene3D" id="2.30.140.40">
    <property type="entry name" value="Pestivirus Npro endopeptidase C53, interaction domain"/>
    <property type="match status" value="1"/>
</dbReference>
<dbReference type="Gene3D" id="3.90.730.10">
    <property type="entry name" value="Ribonuclease T2-like"/>
    <property type="match status" value="1"/>
</dbReference>
<dbReference type="InterPro" id="IPR021824">
    <property type="entry name" value="Capsid-C_pestivirus"/>
</dbReference>
<dbReference type="InterPro" id="IPR043502">
    <property type="entry name" value="DNA/RNA_pol_sf"/>
</dbReference>
<dbReference type="InterPro" id="IPR011492">
    <property type="entry name" value="Flavi_DEAD"/>
</dbReference>
<dbReference type="InterPro" id="IPR014001">
    <property type="entry name" value="Helicase_ATP-bd"/>
</dbReference>
<dbReference type="InterPro" id="IPR001650">
    <property type="entry name" value="Helicase_C-like"/>
</dbReference>
<dbReference type="InterPro" id="IPR022120">
    <property type="entry name" value="NS2"/>
</dbReference>
<dbReference type="InterPro" id="IPR030399">
    <property type="entry name" value="NS2_C74"/>
</dbReference>
<dbReference type="InterPro" id="IPR049486">
    <property type="entry name" value="NS3-hel_C_flaviviridae"/>
</dbReference>
<dbReference type="InterPro" id="IPR027417">
    <property type="entry name" value="P-loop_NTPase"/>
</dbReference>
<dbReference type="InterPro" id="IPR008751">
    <property type="entry name" value="Peptidase_C53"/>
</dbReference>
<dbReference type="InterPro" id="IPR042542">
    <property type="entry name" value="Peptidase_C53_interaction"/>
</dbReference>
<dbReference type="InterPro" id="IPR032521">
    <property type="entry name" value="Pestivirus_E2"/>
</dbReference>
<dbReference type="InterPro" id="IPR042309">
    <property type="entry name" value="Pestivirus_E2_A"/>
</dbReference>
<dbReference type="InterPro" id="IPR042310">
    <property type="entry name" value="Pestivirus_E2_B"/>
</dbReference>
<dbReference type="InterPro" id="IPR042311">
    <property type="entry name" value="Pestivirus_E2_D"/>
</dbReference>
<dbReference type="InterPro" id="IPR000280">
    <property type="entry name" value="Pestivirus_NS3_S31"/>
</dbReference>
<dbReference type="InterPro" id="IPR043128">
    <property type="entry name" value="Rev_trsase/Diguanyl_cyclase"/>
</dbReference>
<dbReference type="InterPro" id="IPR007094">
    <property type="entry name" value="RNA-dir_pol_PSvirus"/>
</dbReference>
<dbReference type="InterPro" id="IPR002166">
    <property type="entry name" value="RNA_pol_HCV"/>
</dbReference>
<dbReference type="InterPro" id="IPR036430">
    <property type="entry name" value="RNase_T2-like_sf"/>
</dbReference>
<dbReference type="InterPro" id="IPR033130">
    <property type="entry name" value="RNase_T2_His_AS_2"/>
</dbReference>
<dbReference type="PANTHER" id="PTHR18934">
    <property type="entry name" value="ATP-DEPENDENT RNA HELICASE"/>
    <property type="match status" value="1"/>
</dbReference>
<dbReference type="PANTHER" id="PTHR18934:SF99">
    <property type="entry name" value="ATP-DEPENDENT RNA HELICASE DHX37-RELATED"/>
    <property type="match status" value="1"/>
</dbReference>
<dbReference type="Pfam" id="PF11889">
    <property type="entry name" value="Capsid_pestivir"/>
    <property type="match status" value="1"/>
</dbReference>
<dbReference type="Pfam" id="PF20907">
    <property type="entry name" value="Flav_NS3-hel_C"/>
    <property type="match status" value="1"/>
</dbReference>
<dbReference type="Pfam" id="PF07652">
    <property type="entry name" value="Flavi_DEAD"/>
    <property type="match status" value="1"/>
</dbReference>
<dbReference type="Pfam" id="PF00271">
    <property type="entry name" value="Helicase_C"/>
    <property type="match status" value="1"/>
</dbReference>
<dbReference type="Pfam" id="PF05550">
    <property type="entry name" value="Peptidase_C53"/>
    <property type="match status" value="1"/>
</dbReference>
<dbReference type="Pfam" id="PF12387">
    <property type="entry name" value="Peptidase_C74"/>
    <property type="match status" value="1"/>
</dbReference>
<dbReference type="Pfam" id="PF05578">
    <property type="entry name" value="Peptidase_S31"/>
    <property type="match status" value="1"/>
</dbReference>
<dbReference type="Pfam" id="PF16329">
    <property type="entry name" value="Pestivirus_E2"/>
    <property type="match status" value="1"/>
</dbReference>
<dbReference type="Pfam" id="PF00998">
    <property type="entry name" value="RdRP_3"/>
    <property type="match status" value="1"/>
</dbReference>
<dbReference type="PRINTS" id="PR00729">
    <property type="entry name" value="CDVENDOPTASE"/>
</dbReference>
<dbReference type="SMART" id="SM00487">
    <property type="entry name" value="DEXDc"/>
    <property type="match status" value="1"/>
</dbReference>
<dbReference type="SMART" id="SM00490">
    <property type="entry name" value="HELICc"/>
    <property type="match status" value="1"/>
</dbReference>
<dbReference type="SUPFAM" id="SSF56672">
    <property type="entry name" value="DNA/RNA polymerases"/>
    <property type="match status" value="1"/>
</dbReference>
<dbReference type="SUPFAM" id="SSF52540">
    <property type="entry name" value="P-loop containing nucleoside triphosphate hydrolases"/>
    <property type="match status" value="1"/>
</dbReference>
<dbReference type="SUPFAM" id="SSF55895">
    <property type="entry name" value="Ribonuclease Rh-like"/>
    <property type="match status" value="1"/>
</dbReference>
<dbReference type="PROSITE" id="PS51192">
    <property type="entry name" value="HELICASE_ATP_BIND_1"/>
    <property type="match status" value="1"/>
</dbReference>
<dbReference type="PROSITE" id="PS51194">
    <property type="entry name" value="HELICASE_CTER"/>
    <property type="match status" value="1"/>
</dbReference>
<dbReference type="PROSITE" id="PS51692">
    <property type="entry name" value="PESTIVIRUS_NS2_PRO"/>
    <property type="match status" value="1"/>
</dbReference>
<dbReference type="PROSITE" id="PS51535">
    <property type="entry name" value="PESTIVIRUS_NS3PRO"/>
    <property type="match status" value="1"/>
</dbReference>
<dbReference type="PROSITE" id="PS51876">
    <property type="entry name" value="PV_NPRO"/>
    <property type="match status" value="1"/>
</dbReference>
<dbReference type="PROSITE" id="PS50507">
    <property type="entry name" value="RDRP_SSRNA_POS"/>
    <property type="match status" value="1"/>
</dbReference>
<dbReference type="PROSITE" id="PS00531">
    <property type="entry name" value="RNASE_T2_2"/>
    <property type="match status" value="1"/>
</dbReference>
<sequence length="3898" mass="437808">MELITNELLYKTYKQKPVGVEEPVYDQAGNPLFGERGAIHPQSTLKLPHKRGERNVPTSLASLPKRGDCRSGNSKGPVSGIYLKPGPLFYQDYKGPVYHRAPLELFEEGSMCETTKRIGRVTGSDGKLYHIYICIDGCITVKSATRSHQRVLRWVHNRLDCPLWVTSCSDTKEEGATKKKQQKPDRLEKGRMKIVPKESEKDSKTKPPDATIVVDGVKYQVKKKGKVKSKNTQDGLYHNKNKPPESRKKLEKALLAWAILAVVLIEVTMGENITQWNLQDNGTEGIQRAMFQRGVNRSLHGIWPEKICTGVPSHLATDVELKTIHGMMDASEKTNYTCCRLQRHEWNKHGWCNWYNIEPWILIMNRTQANLTEGQPPRECAVTCRYDRDSDLNVVTQARDSPTPLTGCKKGKNFSFAGVLTRGPCNFEIAASDVLFKEHECTGVFQDTAHYLVDGVTNSLESARQGTAKLTTWLGKQLGILGKKLENKSKTWFGAYAASPYCDVDRKIGYIWFTKNCTPACLPKNTKIIGPGKFDTNAEDGKILHEMGGHLSEVLLLSLVVLSDFAPETASAMYLILHFSIPQSHVDITDCDKTQLNLTIELTTADVIPGSVWNLGKYVCIRPDWWPYETAAVLAFEEVGQVVKIVLRALRDLTRIWNAATTTAFLVCLIKMVRGQVVQGILWLLLITGVQGHLDCKPEYSYAIAKNDRVGPLGAEGLTTVWKDYSHEMKLEDTMVIAWCKGGKFTYLSRCTRETRYLAILHSRALPTSVVFKKLFEGQKQEDTVEMDDDFEFGLCPCDAKPIVRGKFNTTLLNGPAFQMVCPIGWTGTVSCMLANRDTLDTAVVRTYRRSVPFPYRQGCITQKTLGEDLYDCALGGNWTCVTGDQSRYTGGLIESCKWCGYKFQKSEGLPHYPIGKCRLNNETGYRLVDDTSCDREGVAIVPHGLVKCKIGDTTVQVIATDTKLGPMPCKPHEIISSEGPIEKTACTFNYTRTLKNKYFEPRDSYFQQYMLKGDYQYWFDLEVTDHHRDYFAESILVVVVALLGGRYVLWLLVTYMVLSEQKASGAQYGAGEVVMMGNLLTHDNVEVVTYFFLLYLLLREESVKKWVLLLYHILVAHPLKSVIVILLMIGDVVKADPGGQGYLGQIDVCFTMVVIIIIGLIIARRDPTIVPLITIVASLRVTGLTYSPGVDAAMAVITITLLMVSYVTDYFRYKRWLQCILSLVSGVFLIRCLIHLGRIETPEVTIPNWRPLTLILFYLISTTVVTMWKIDLAGLLLQGVPILLLITTLWADFLTLILILPTYELVKLYYLKTIKTDIEKSWLGGLDYKRVDSIYDVDESGEGVYLFPSRQKAQKNFSMLLPLVRATLISCVSSKWQLIYMAYLSVDFMYYMHRKVIEEISGGTNMISRIVAALIELNWSMEEEESKGLKKFYLLSGRLRNLIIKHKVRNETVAGWYGEEEVYGMPKIMTIIKASTLNKNKHCIICTVCEGRKWKGGTCPKCGRHGKPITCGMSLADFEERHYKRIFIREGNFEGPFRQEYNGFIQYTARGQLFLRNLPILATKVKMLMVGNLGEEVGDLEHLGWILRGPAVCKKITEHERCHINILDKLTAFFGIMPRGTTPRAPVRFPTSLLKVRRGLETGWAYTHQGGISSVDHVTAGKDLLVCDSMGRTRVVCQSNNKLTDETEYGVKTDSGCPDGARCYVLNPEAVNISGSKGAVVHLQKTGGEFTCVTASGTPAFFDLKNLKGWSGLPIFEASSGRVVGRVKVGKNEESKPTKIMSGIQTVSKNTADLTEMVKKITSMNRGDFKQITLATGAGKTTELPKAVIEEIGRHKRVLVLIPLRAAAESVYQYMRLKHPSISFNLRIGDMKEGDMATGITYASYGYFCQMPQPKLRAAMVEYSYIFLDEYHCATPEQLAIIGKIHRFSESIRVVAMTATPAGSVTTTGQKHPIEEFIAPEVMEGEDLGSQFLDIAGLKIPVDEMKGNMLVFVPTRNMAVEVAKKLKAKGYNSGYYYSGEDPANLRVVTSQSPYVIVATNAIESGVTLPDLDTVVDTGLKCEKRVRVSSKIPFIVTGLKRMAVTVGEQAQRRGRVGRVKPGRYYRSQETATGSKDYHYDLLQAQRYGIEDGINVTKSFREMNYDWSLYEEDSLLITQLEILNNLLISEDLPAAVKNIMARTDHPEPIQLAYNSYEVQVPVLFPKIRNGEVTDTYENYSFLNARKLGEDVPVYIYATEDEDLAVDLLGLDWPDPGNQQVVETGKALKQVAGLSSAENALLVALFGYVGYQALSKRHVPMITDIYTIEDQRLEDTTHLQYAPNAIKTEGTETELKELASGDVEKIMGAISDYAAGGLDFVKSQAEKIKTAPLFKENVEAARGYVQKLIDSLIEDKDVIIRYGLWGTHTALYKSIAARLGHETAFATLVLKWLAFGGETVSDHIRQAAVDLVVYYVMNKPSFPGDTETQQEGRRFVASLFISALATYTYKTWNYNNLSKVVEPALAYLPYATSALKMFTPTRLESVVILSTTIYKTYLSIRKGKSDGLLGTGISAAMEILSQNPVSVGISVMLGVGAIAAHNAIESSEQKRTLLMKVFVKNFLDQAATDELVKENPEKIIMALFEAVQTIGNPLRLIYHLYGVYYKGWEAKELSERTAGRNLFTLIMFEAFELLGMDSEGKIRNLSGNYILDLIHGLHKQINRGLKKIVLGWAPAPFSCDWTPSDERIRLPTDSYLRVETKCPCGYEMKALKNVSGKLTKVEESGPFLCRNRPGRGPVNYRVTKYYDDNLREIRPVAKLEGQVEHYYKGVTARIDYSKGKTLLATDKWEVEHGTLTRLTKRYTGVGFRGAYLGDEPNHRDLVERDCATITKNTVQFLKMKKGCAFTYDLTISNLTRLIELVHRNNLEEKEIPTATVTTWLAYTFVNEDVGTIKPVLGERVIPDPVVDINLQPEVQVDTSEVGITIIGKEAVMTTGVTPVMEKVEPDTDNNQSSVKIGLDEGNYPGPGVQTHTLVEEIHNKDARPFIMVLGSKSSMSNRAKTARNINLYTGNDPREIRDLMAEGRILVVALRDIDPDLSELVDFKGTFLDREALEALSLGQPKPKQVTKAAIRDLLKEERQVEIPDWFTSDDPVFLDIAMKKDKYHLIGDVVEVKDQAKALGATDQTRIVKEVGSRTYTMKLSSWFLQASSKQMSLTPLFEELLLRCPPATKSNKGHMASAYQLAQGNWEPLGCGVHLGTVPARRVKMHPYEAYLKLKDLVEEEEKKPRIRDTVIREHNKWILKKIKFQGNLNTKKMLNPGKLSEQLDREGHKRNIYNNQISTVMSSAGIRLEKLPIVRAQTDTKSFHEAIRDKIDKNENRQNPELHNKLLEIFHTIADPSLKHTYGEVTWEQLEAGINRKGAAGFLEKKNIGEVLDSEKHLVEQLVRDLKAGRKIRYYETAIPKNEKRDVSDDWQAGDLVDEKKPRVIQYPEAKTRLAITKVMYNWVKQQPVVIPGYEGKTPLFNIFNKVRKEWDLFNEPVAVSFDTKAWDTQVTSRDLHLIGEIQKYYYRKEWHKFIDTITDHMVEVPVITADGEVYIRNGQRGSGQPDTSAGNSMLNVLTMIYAFCESTGVPYKSFNRVAKIHVCGDDGFLITEKGLGLKFSNKGMQILHEAGKPQKLTEGEKMKVAYKFEDIEFCSHTPVPVRWSDNTSSYMAGRDTAVILSKMATRLDSSGERGTTAYEKAVAFSFLLMYSWNPLVRRICLLVLSQRPETAPSTQTTYYYKGDPIGAYKDVIGRNLSELKRTGFEKLANLNLSLSTLGIWTKHTSKRIIQDCVAIGKEEGNWLVNADRLISSKTGHLYIPDKGFTLQGKHYEQLQLGAETNPVMGVGTERYKLGPIVNLLLRRLKVLLMAAVGASS</sequence>
<comment type="function">
    <molecule>N-terminal protease</molecule>
    <text evidence="2">Leader cysteine autoprotease that cleaves itself from the nascent polyprotein during translation of the viral mRNA. Once released, plays a role in the inhibition of host innate immune response by interacting with host IRF3 and inducing its proteasomal degradation.</text>
</comment>
<comment type="function">
    <molecule>Capsid protein C</molecule>
    <text evidence="3">Packages viral RNA to form a viral nucleocapsid and thereby protects viral RNA. Also plays a role in transcription regulation. Protects the incoming virus against IFN-induced effectors.</text>
</comment>
<comment type="function">
    <molecule>E(rns) glycoprotein</molecule>
    <text evidence="2 4">Initial binding to target cell probably involves interaction of E(rns) with glycosaminoglycans (By similarity). Also possesses intrinsic ribonuclease (RNase) activity that can inhibit the production of type I interferon and assist in the development of persistent infections (By similarity).</text>
</comment>
<comment type="function">
    <molecule>Envelope glycoprotein E1</molecule>
    <text evidence="2">E1 and/or E2 are probably responsible of cell attachment with CD46 and subsequent fusion after internalization of the virion by endocytosis.</text>
</comment>
<comment type="function">
    <molecule>Envelope glycoprotein E2</molecule>
    <text evidence="2">E1 and/or E2 are probably responsible of cell attachment with CD46 and subsequent fusion after internalization of the virion by endocytosis (By similarity). Probably functions as a coeffector of fusion providing structural integrity to the fusion complex and possibly controlling exposure of the fusion motif in E1 (By similarity).</text>
</comment>
<comment type="function">
    <molecule>Viroporin p7</molecule>
    <text evidence="3">Plays an essential role in the virus replication cycle by acting as a viroporin (By similarity). Forms ion conductive pores, which alters the cell permeability allowing the transport of ions and other small molecules (By similarity). Forms a leader sequence to properly orient NS2 in the membrane.</text>
</comment>
<comment type="function">
    <molecule>Non-structural protein 2-3</molecule>
    <text>Uncleaved NS2-3 is required for production of infectious virus.</text>
</comment>
<comment type="function">
    <molecule>Cysteine protease NS2</molecule>
    <text evidence="3">Plays a role in the regulation of viral RNA replication.</text>
</comment>
<comment type="function">
    <molecule>Serine protease NS3</molecule>
    <text evidence="3">Multifunctional protein that contains an N-terminal protease and a C-terminal helicase, playing essential roles in viral polyprotein processing and viral genome replication. The chymotrypsin-like serine protease activity utilizes NS4A as an essential cofactor and catalyzes the cleavage of the polyprotein leading to the release of NS4A, NS4B, NS5A, and NS5B. Interacts with NS5B to enhance RNA-dependent RNA polymerase activity.</text>
</comment>
<comment type="function">
    <molecule>Non-structural protein 4A</molecule>
    <text evidence="3">Acts as a cofactor for the NS3 protease activity.</text>
</comment>
<comment type="function">
    <molecule>Non-structural protein 4B</molecule>
    <text evidence="2 3">Induces a specific membrane alteration that serves as a scaffold for the virus replication complex (By similarity). Plays a role in the inhibition of host innate immune response by inhibiting RIGI/IFIH1-mediated IFN-beta production (By similarity).</text>
</comment>
<comment type="function">
    <molecule>RNA-directed RNA polymerase</molecule>
    <text evidence="2">Replicates the viral (+) and (-) genome. Initiates the primer-independent RNA replication via a de novo mechanism requiring GTP (By similarity).</text>
</comment>
<comment type="catalytic activity">
    <molecule>Serine protease NS3</molecule>
    <reaction>
        <text>Leu is conserved at position P1 for all four cleavage sites. Alanine is found at position P1' of the NS4A-NS4B cleavage site, whereas serine is found at position P1' of the NS3-NS4A, NS4B-NS5A and NS5A-NS5B cleavage sites.</text>
        <dbReference type="EC" id="3.4.21.113"/>
    </reaction>
</comment>
<comment type="catalytic activity">
    <molecule>RNA-directed RNA polymerase</molecule>
    <reaction evidence="6">
        <text>RNA(n) + a ribonucleoside 5'-triphosphate = RNA(n+1) + diphosphate</text>
        <dbReference type="Rhea" id="RHEA:21248"/>
        <dbReference type="Rhea" id="RHEA-COMP:14527"/>
        <dbReference type="Rhea" id="RHEA-COMP:17342"/>
        <dbReference type="ChEBI" id="CHEBI:33019"/>
        <dbReference type="ChEBI" id="CHEBI:61557"/>
        <dbReference type="ChEBI" id="CHEBI:140395"/>
        <dbReference type="EC" id="2.7.7.48"/>
    </reaction>
</comment>
<comment type="catalytic activity">
    <molecule>Serine protease NS3</molecule>
    <reaction>
        <text>a ribonucleoside 5'-triphosphate + H2O = a ribonucleoside 5'-diphosphate + phosphate + H(+)</text>
        <dbReference type="Rhea" id="RHEA:23680"/>
        <dbReference type="ChEBI" id="CHEBI:15377"/>
        <dbReference type="ChEBI" id="CHEBI:15378"/>
        <dbReference type="ChEBI" id="CHEBI:43474"/>
        <dbReference type="ChEBI" id="CHEBI:57930"/>
        <dbReference type="ChEBI" id="CHEBI:61557"/>
        <dbReference type="EC" id="3.6.1.15"/>
    </reaction>
</comment>
<comment type="catalytic activity">
    <molecule>Serine protease NS3</molecule>
    <reaction>
        <text>ATP + H2O = ADP + phosphate + H(+)</text>
        <dbReference type="Rhea" id="RHEA:13065"/>
        <dbReference type="ChEBI" id="CHEBI:15377"/>
        <dbReference type="ChEBI" id="CHEBI:15378"/>
        <dbReference type="ChEBI" id="CHEBI:30616"/>
        <dbReference type="ChEBI" id="CHEBI:43474"/>
        <dbReference type="ChEBI" id="CHEBI:456216"/>
        <dbReference type="EC" id="3.6.4.13"/>
    </reaction>
</comment>
<comment type="catalytic activity">
    <molecule>E(rns) glycoprotein</molecule>
    <reaction evidence="4">
        <text>a ribonucleotidyl-ribonucleotide-RNA + H2O = a 3'-end 3'-phospho-ribonucleotide-RNA + a 5'-end dephospho-ribonucleoside-RNA + H(+)</text>
        <dbReference type="Rhea" id="RHEA:68052"/>
        <dbReference type="Rhea" id="RHEA-COMP:10463"/>
        <dbReference type="Rhea" id="RHEA-COMP:13936"/>
        <dbReference type="Rhea" id="RHEA-COMP:17355"/>
        <dbReference type="ChEBI" id="CHEBI:15377"/>
        <dbReference type="ChEBI" id="CHEBI:15378"/>
        <dbReference type="ChEBI" id="CHEBI:83062"/>
        <dbReference type="ChEBI" id="CHEBI:138284"/>
        <dbReference type="ChEBI" id="CHEBI:173118"/>
        <dbReference type="EC" id="4.6.1.19"/>
    </reaction>
    <physiologicalReaction direction="left-to-right" evidence="4">
        <dbReference type="Rhea" id="RHEA:68053"/>
    </physiologicalReaction>
</comment>
<comment type="catalytic activity">
    <molecule>E(rns) glycoprotein</molecule>
    <reaction evidence="4">
        <text>a ribonucleotidyl-ribonucleotide-RNA = a 3'-end 2',3'-cyclophospho-ribonucleotide-RNA + a 5'-end dephospho-ribonucleoside-RNA</text>
        <dbReference type="Rhea" id="RHEA:67796"/>
        <dbReference type="Rhea" id="RHEA-COMP:10464"/>
        <dbReference type="Rhea" id="RHEA-COMP:13936"/>
        <dbReference type="Rhea" id="RHEA-COMP:17355"/>
        <dbReference type="ChEBI" id="CHEBI:83064"/>
        <dbReference type="ChEBI" id="CHEBI:138284"/>
        <dbReference type="ChEBI" id="CHEBI:173118"/>
    </reaction>
    <physiologicalReaction direction="left-to-right" evidence="4">
        <dbReference type="Rhea" id="RHEA:67797"/>
    </physiologicalReaction>
</comment>
<comment type="catalytic activity">
    <molecule>E(rns) glycoprotein</molecule>
    <reaction evidence="4">
        <text>a 3'-end 2',3'-cyclophospho-ribonucleotide-RNA + H2O = a 3'-end 3'-phospho-ribonucleotide-RNA + H(+)</text>
        <dbReference type="Rhea" id="RHEA:68056"/>
        <dbReference type="Rhea" id="RHEA-COMP:10463"/>
        <dbReference type="Rhea" id="RHEA-COMP:10464"/>
        <dbReference type="ChEBI" id="CHEBI:15377"/>
        <dbReference type="ChEBI" id="CHEBI:15378"/>
        <dbReference type="ChEBI" id="CHEBI:83062"/>
        <dbReference type="ChEBI" id="CHEBI:83064"/>
    </reaction>
    <physiologicalReaction direction="left-to-right" evidence="4">
        <dbReference type="Rhea" id="RHEA:68057"/>
    </physiologicalReaction>
</comment>
<comment type="activity regulation">
    <molecule>E(rns) glycoprotein</molecule>
    <text evidence="4">Inhibited by Zn(2+), which binds the catalytic site.</text>
</comment>
<comment type="subunit">
    <molecule>E(rns) glycoprotein</molecule>
    <text evidence="4">Homodimer; disulfide-linked.</text>
</comment>
<comment type="subunit">
    <molecule>Envelope glycoprotein E1</molecule>
    <text evidence="3">Homodimer; disulfide-linked (By similarity). Heterodimer with E1; disulfide-linked (By similarity).</text>
</comment>
<comment type="subunit">
    <molecule>Envelope glycoprotein E2</molecule>
    <text evidence="2 3">Homodimer; disulfide-linked (By similarity). Heterodimer with E1; disulfide-linked (By similarity).</text>
</comment>
<comment type="subunit">
    <molecule>Non-structural protein 4B</molecule>
    <text evidence="2">Interacts with host IFIH1/MDA5; this interaction is involved in the inhibition of IFN-beta production.</text>
</comment>
<comment type="subcellular location">
    <molecule>Capsid protein C</molecule>
    <subcellularLocation>
        <location evidence="3">Virion</location>
    </subcellularLocation>
</comment>
<comment type="subcellular location">
    <molecule>E(rns) glycoprotein</molecule>
    <subcellularLocation>
        <location evidence="2">Host membrane</location>
        <topology evidence="2">Peripheral membrane protein</topology>
    </subcellularLocation>
    <subcellularLocation>
        <location evidence="2">Virion membrane</location>
        <topology evidence="14">Peripheral membrane protein</topology>
    </subcellularLocation>
    <text evidence="14">The C-terminus membrane anchor of Erns represents an amphipathic helix embedded in plane into the membrane.</text>
</comment>
<comment type="subcellular location">
    <molecule>Envelope glycoprotein E1</molecule>
    <subcellularLocation>
        <location>Host endoplasmic reticulum membrane</location>
        <topology evidence="4">Single-pass type I membrane protein</topology>
    </subcellularLocation>
    <subcellularLocation>
        <location evidence="3">Virion membrane</location>
        <topology>Single-pass type I membrane protein</topology>
    </subcellularLocation>
    <text evidence="4">The C-terminal transmembrane domain acts as a signal sequence and forms a hairpin structure before cleavage by host signal peptidase. This explains that E1 and E2 are mostly lumenal. After cleavage, the C-terminus transmembrane sequence acts as ER membrane anchor.</text>
</comment>
<comment type="subcellular location">
    <molecule>Envelope glycoprotein E2</molecule>
    <subcellularLocation>
        <location>Host endoplasmic reticulum membrane</location>
        <topology evidence="4">Single-pass type I membrane protein</topology>
    </subcellularLocation>
    <subcellularLocation>
        <location evidence="2">Virion membrane</location>
        <topology>Single-pass type I membrane protein</topology>
    </subcellularLocation>
    <text evidence="4">The C-terminal transmembrane domain acts as a signal sequence and forms a hairpin structure before cleavage by host signal peptidase. This explains that E1 and E2 are mostly lumenal. After cleavage, the C-terminus transmembrane sequence acts as ER membrane anchor.</text>
</comment>
<comment type="subcellular location">
    <molecule>Cysteine protease NS2</molecule>
    <subcellularLocation>
        <location evidence="10">Host membrane</location>
        <topology evidence="10">Multi-pass membrane protein</topology>
    </subcellularLocation>
</comment>
<comment type="subcellular location">
    <molecule>Serine protease NS3</molecule>
    <subcellularLocation>
        <location evidence="3">Host cytoplasm</location>
    </subcellularLocation>
</comment>
<comment type="subcellular location">
    <molecule>Non-structural protein 4B</molecule>
    <subcellularLocation>
        <location evidence="3">Host cytoplasm</location>
    </subcellularLocation>
</comment>
<comment type="subcellular location">
    <molecule>Non-structural protein 5A</molecule>
    <subcellularLocation>
        <location evidence="14">Host membrane</location>
        <topology evidence="4">Peripheral membrane protein</topology>
    </subcellularLocation>
    <text evidence="4">The N-terminus membrane anchor represents an amphipathic helix embedded in plane into the membrane.</text>
</comment>
<comment type="domain">
    <molecule>Envelope glycoprotein E1</molecule>
    <text evidence="4">The transmembrane domain is responsible for ER localization.</text>
</comment>
<comment type="domain">
    <molecule>Envelope glycoprotein E2</molecule>
    <text evidence="4">The transmembrane domain is responsible for ER localization.</text>
</comment>
<comment type="PTM">
    <molecule>E(rns) glycoprotein</molecule>
    <text evidence="3">Heavily glycosylated.</text>
</comment>
<comment type="PTM">
    <text evidence="3">The viral RNA of pestiviruses is expressed as a single polyprotein which undergoes post-translational proteolytic processing resulting in the production of at least eleven individual proteins. The N-terminal protease cleaves itself from the nascent polyprotein autocatalytically and thereby generates the N-terminus of the adjacent viral capsid protein C.</text>
</comment>
<comment type="PTM">
    <molecule>Genome polyprotein</molecule>
    <text>Cleavage between E2 and p7 is partial.</text>
</comment>
<comment type="miscellaneous">
    <text>BVDV is divided in two types: cytopathic and non-cytopathic. Both types of viruses can be found in animals suffering from mucosal disease, as a cytopathic BVDV can develop from a non-cytopathic virus within the infected animal by deletions, mutations or insertions. Both types express uncleaved NS2-3, but cytopathic strains also express NS3.</text>
</comment>
<comment type="similarity">
    <text evidence="14">Belongs to the pestivirus polyprotein family.</text>
</comment>
<protein>
    <recommendedName>
        <fullName>Genome polyprotein</fullName>
    </recommendedName>
    <component>
        <recommendedName>
            <fullName>N-terminal protease</fullName>
            <shortName>N-pro</shortName>
            <ecNumber>3.4.22.-</ecNumber>
        </recommendedName>
        <alternativeName>
            <fullName>Autoprotease p20</fullName>
        </alternativeName>
    </component>
    <component>
        <recommendedName>
            <fullName>Capsid protein C</fullName>
        </recommendedName>
        <alternativeName>
            <fullName>p14</fullName>
        </alternativeName>
    </component>
    <component>
        <recommendedName>
            <fullName>E(rns) glycoprotein</fullName>
        </recommendedName>
        <alternativeName>
            <fullName>gp44/48</fullName>
            <ecNumber evidence="4">4.6.1.19</ecNumber>
        </alternativeName>
    </component>
    <component>
        <recommendedName>
            <fullName>Envelope glycoprotein E1</fullName>
        </recommendedName>
        <alternativeName>
            <fullName>gp33</fullName>
        </alternativeName>
    </component>
    <component>
        <recommendedName>
            <fullName>Envelope glycoprotein E2</fullName>
        </recommendedName>
        <alternativeName>
            <fullName>gp55</fullName>
        </alternativeName>
    </component>
    <component>
        <recommendedName>
            <fullName evidence="3">Viroporin p7</fullName>
        </recommendedName>
    </component>
    <component>
        <recommendedName>
            <fullName>Non-structural protein 2-3</fullName>
        </recommendedName>
    </component>
    <component>
        <recommendedName>
            <fullName>Cysteine protease NS2</fullName>
            <ecNumber>3.4.22.-</ecNumber>
        </recommendedName>
        <alternativeName>
            <fullName>Non-structural protein 2</fullName>
        </alternativeName>
        <alternativeName>
            <fullName>p54</fullName>
        </alternativeName>
    </component>
    <component>
        <recommendedName>
            <fullName>Serine protease NS3</fullName>
            <ecNumber>3.4.21.113</ecNumber>
            <ecNumber>3.6.1.15</ecNumber>
            <ecNumber>3.6.4.13</ecNumber>
        </recommendedName>
        <alternativeName>
            <fullName>Non-structural protein 3</fullName>
        </alternativeName>
        <alternativeName>
            <fullName>p80</fullName>
        </alternativeName>
    </component>
    <component>
        <recommendedName>
            <fullName>Non-structural protein 4A</fullName>
            <shortName>NS4A</shortName>
        </recommendedName>
        <alternativeName>
            <fullName>p10</fullName>
        </alternativeName>
    </component>
    <component>
        <recommendedName>
            <fullName>Non-structural protein 4B</fullName>
            <shortName>NS4B</shortName>
        </recommendedName>
        <alternativeName>
            <fullName>p30</fullName>
        </alternativeName>
    </component>
    <component>
        <recommendedName>
            <fullName>Non-structural protein 5A</fullName>
            <shortName>NS5A</shortName>
        </recommendedName>
        <alternativeName>
            <fullName>p58</fullName>
        </alternativeName>
    </component>
    <component>
        <recommendedName>
            <fullName>RNA-directed RNA polymerase</fullName>
            <ecNumber>2.7.7.48</ecNumber>
        </recommendedName>
        <alternativeName>
            <fullName>NS5B</fullName>
        </alternativeName>
        <alternativeName>
            <fullName>p75</fullName>
        </alternativeName>
    </component>
</protein>
<evidence type="ECO:0000250" key="1"/>
<evidence type="ECO:0000250" key="2">
    <source>
        <dbReference type="UniProtKB" id="P19711"/>
    </source>
</evidence>
<evidence type="ECO:0000250" key="3">
    <source>
        <dbReference type="UniProtKB" id="P19712"/>
    </source>
</evidence>
<evidence type="ECO:0000250" key="4">
    <source>
        <dbReference type="UniProtKB" id="Q96662"/>
    </source>
</evidence>
<evidence type="ECO:0000255" key="5"/>
<evidence type="ECO:0000255" key="6">
    <source>
        <dbReference type="PROSITE-ProRule" id="PRU00539"/>
    </source>
</evidence>
<evidence type="ECO:0000255" key="7">
    <source>
        <dbReference type="PROSITE-ProRule" id="PRU00541"/>
    </source>
</evidence>
<evidence type="ECO:0000255" key="8">
    <source>
        <dbReference type="PROSITE-ProRule" id="PRU00542"/>
    </source>
</evidence>
<evidence type="ECO:0000255" key="9">
    <source>
        <dbReference type="PROSITE-ProRule" id="PRU00868"/>
    </source>
</evidence>
<evidence type="ECO:0000255" key="10">
    <source>
        <dbReference type="PROSITE-ProRule" id="PRU01029"/>
    </source>
</evidence>
<evidence type="ECO:0000255" key="11">
    <source>
        <dbReference type="PROSITE-ProRule" id="PRU01224"/>
    </source>
</evidence>
<evidence type="ECO:0000256" key="12">
    <source>
        <dbReference type="SAM" id="MobiDB-lite"/>
    </source>
</evidence>
<evidence type="ECO:0000269" key="13">
    <source>
    </source>
</evidence>
<evidence type="ECO:0000305" key="14"/>
<evidence type="ECO:0007744" key="15">
    <source>
        <dbReference type="PDB" id="2YQ2"/>
    </source>
</evidence>
<evidence type="ECO:0007744" key="16">
    <source>
        <dbReference type="PDB" id="2YQ3"/>
    </source>
</evidence>
<evidence type="ECO:0007829" key="17">
    <source>
        <dbReference type="PDB" id="2YQ2"/>
    </source>
</evidence>